<dbReference type="EMBL" id="AAFI01000139">
    <property type="protein sequence ID" value="EAL64142.1"/>
    <property type="molecule type" value="Genomic_DNA"/>
</dbReference>
<dbReference type="RefSeq" id="XP_637671.1">
    <property type="nucleotide sequence ID" value="XM_632579.1"/>
</dbReference>
<dbReference type="SMR" id="Q54L90"/>
<dbReference type="STRING" id="44689.Q54L90"/>
<dbReference type="iPTMnet" id="Q54L90"/>
<dbReference type="PaxDb" id="44689-DDB0231996"/>
<dbReference type="GeneID" id="8625811"/>
<dbReference type="KEGG" id="ddi:DDB_G0286773"/>
<dbReference type="dictyBase" id="DDB_G0286773">
    <property type="gene designation" value="gflB"/>
</dbReference>
<dbReference type="VEuPathDB" id="AmoebaDB:DDB_G0286773"/>
<dbReference type="eggNOG" id="KOG3417">
    <property type="taxonomic scope" value="Eukaryota"/>
</dbReference>
<dbReference type="HOGENOM" id="CLU_244302_0_0_1"/>
<dbReference type="OMA" id="KLWVDYC"/>
<dbReference type="PRO" id="PR:Q54L90"/>
<dbReference type="GO" id="GO:0005938">
    <property type="term" value="C:cell cortex"/>
    <property type="evidence" value="ECO:0000314"/>
    <property type="project" value="dictyBase"/>
</dbReference>
<dbReference type="GO" id="GO:0031252">
    <property type="term" value="C:cell leading edge"/>
    <property type="evidence" value="ECO:0000314"/>
    <property type="project" value="dictyBase"/>
</dbReference>
<dbReference type="GO" id="GO:1904269">
    <property type="term" value="C:cell leading edge cell cortex"/>
    <property type="evidence" value="ECO:0000314"/>
    <property type="project" value="dictyBase"/>
</dbReference>
<dbReference type="GO" id="GO:0005737">
    <property type="term" value="C:cytoplasm"/>
    <property type="evidence" value="ECO:0000314"/>
    <property type="project" value="dictyBase"/>
</dbReference>
<dbReference type="GO" id="GO:0030175">
    <property type="term" value="C:filopodium"/>
    <property type="evidence" value="ECO:0007669"/>
    <property type="project" value="UniProtKB-SubCell"/>
</dbReference>
<dbReference type="GO" id="GO:0030027">
    <property type="term" value="C:lamellipodium"/>
    <property type="evidence" value="ECO:0007669"/>
    <property type="project" value="UniProtKB-SubCell"/>
</dbReference>
<dbReference type="GO" id="GO:0070687">
    <property type="term" value="C:macropinocytic cup cytoskeleton"/>
    <property type="evidence" value="ECO:0000314"/>
    <property type="project" value="dictyBase"/>
</dbReference>
<dbReference type="GO" id="GO:0051015">
    <property type="term" value="F:actin filament binding"/>
    <property type="evidence" value="ECO:0000314"/>
    <property type="project" value="dictyBase"/>
</dbReference>
<dbReference type="GO" id="GO:0008603">
    <property type="term" value="F:cAMP-dependent protein kinase regulator activity"/>
    <property type="evidence" value="ECO:0000314"/>
    <property type="project" value="dictyBase"/>
</dbReference>
<dbReference type="GO" id="GO:0001965">
    <property type="term" value="F:G-protein alpha-subunit binding"/>
    <property type="evidence" value="ECO:0000353"/>
    <property type="project" value="dictyBase"/>
</dbReference>
<dbReference type="GO" id="GO:0005085">
    <property type="term" value="F:guanyl-nucleotide exchange factor activity"/>
    <property type="evidence" value="ECO:0000314"/>
    <property type="project" value="dictyBase"/>
</dbReference>
<dbReference type="GO" id="GO:0031267">
    <property type="term" value="F:small GTPase binding"/>
    <property type="evidence" value="ECO:0000353"/>
    <property type="project" value="dictyBase"/>
</dbReference>
<dbReference type="GO" id="GO:0006935">
    <property type="term" value="P:chemotaxis"/>
    <property type="evidence" value="ECO:0007669"/>
    <property type="project" value="UniProtKB-KW"/>
</dbReference>
<dbReference type="GO" id="GO:0060097">
    <property type="term" value="P:cytoskeletal rearrangement involved in phagocytosis, engulfment"/>
    <property type="evidence" value="ECO:0000315"/>
    <property type="project" value="dictyBase"/>
</dbReference>
<dbReference type="GO" id="GO:0030837">
    <property type="term" value="P:negative regulation of actin filament polymerization"/>
    <property type="evidence" value="ECO:0000315"/>
    <property type="project" value="dictyBase"/>
</dbReference>
<dbReference type="GO" id="GO:0046580">
    <property type="term" value="P:negative regulation of Ras protein signal transduction"/>
    <property type="evidence" value="ECO:0000315"/>
    <property type="project" value="dictyBase"/>
</dbReference>
<dbReference type="GO" id="GO:1905511">
    <property type="term" value="P:positive regulation of myosin II filament assembly"/>
    <property type="evidence" value="ECO:0000315"/>
    <property type="project" value="dictyBase"/>
</dbReference>
<dbReference type="GO" id="GO:0032486">
    <property type="term" value="P:Rap protein signal transduction"/>
    <property type="evidence" value="ECO:0000314"/>
    <property type="project" value="dictyBase"/>
</dbReference>
<dbReference type="GO" id="GO:0061118">
    <property type="term" value="P:regulation of positive chemotaxis to cAMP"/>
    <property type="evidence" value="ECO:0000315"/>
    <property type="project" value="dictyBase"/>
</dbReference>
<dbReference type="CDD" id="cd06224">
    <property type="entry name" value="REM"/>
    <property type="match status" value="1"/>
</dbReference>
<dbReference type="CDD" id="cd00159">
    <property type="entry name" value="RhoGAP"/>
    <property type="match status" value="1"/>
</dbReference>
<dbReference type="Gene3D" id="1.10.840.10">
    <property type="entry name" value="Ras guanine-nucleotide exchange factors catalytic domain"/>
    <property type="match status" value="1"/>
</dbReference>
<dbReference type="Gene3D" id="1.10.555.10">
    <property type="entry name" value="Rho GTPase activation protein"/>
    <property type="match status" value="1"/>
</dbReference>
<dbReference type="Gene3D" id="1.20.870.10">
    <property type="entry name" value="Son of sevenless (SoS) protein Chain: S domain 1"/>
    <property type="match status" value="1"/>
</dbReference>
<dbReference type="InterPro" id="IPR056651">
    <property type="entry name" value="GlfB-like_C"/>
</dbReference>
<dbReference type="InterPro" id="IPR000651">
    <property type="entry name" value="Ras-like_Gua-exchang_fac_N"/>
</dbReference>
<dbReference type="InterPro" id="IPR023578">
    <property type="entry name" value="Ras_GEF_dom_sf"/>
</dbReference>
<dbReference type="InterPro" id="IPR001895">
    <property type="entry name" value="RASGEF_cat_dom"/>
</dbReference>
<dbReference type="InterPro" id="IPR036964">
    <property type="entry name" value="RASGEF_cat_dom_sf"/>
</dbReference>
<dbReference type="InterPro" id="IPR008936">
    <property type="entry name" value="Rho_GTPase_activation_prot"/>
</dbReference>
<dbReference type="InterPro" id="IPR000198">
    <property type="entry name" value="RhoGAP_dom"/>
</dbReference>
<dbReference type="PANTHER" id="PTHR45808">
    <property type="entry name" value="RHO GTPASE-ACTIVATING PROTEIN 68F"/>
    <property type="match status" value="1"/>
</dbReference>
<dbReference type="PANTHER" id="PTHR45808:SF2">
    <property type="entry name" value="RHO GTPASE-ACTIVATING PROTEIN 68F"/>
    <property type="match status" value="1"/>
</dbReference>
<dbReference type="Pfam" id="PF24929">
    <property type="entry name" value="GlfB_C"/>
    <property type="match status" value="2"/>
</dbReference>
<dbReference type="Pfam" id="PF00617">
    <property type="entry name" value="RasGEF"/>
    <property type="match status" value="1"/>
</dbReference>
<dbReference type="Pfam" id="PF00618">
    <property type="entry name" value="RasGEF_N"/>
    <property type="match status" value="1"/>
</dbReference>
<dbReference type="Pfam" id="PF00620">
    <property type="entry name" value="RhoGAP"/>
    <property type="match status" value="1"/>
</dbReference>
<dbReference type="SMART" id="SM00147">
    <property type="entry name" value="RasGEF"/>
    <property type="match status" value="1"/>
</dbReference>
<dbReference type="SMART" id="SM00324">
    <property type="entry name" value="RhoGAP"/>
    <property type="match status" value="1"/>
</dbReference>
<dbReference type="SUPFAM" id="SSF48350">
    <property type="entry name" value="GTPase activation domain, GAP"/>
    <property type="match status" value="1"/>
</dbReference>
<dbReference type="SUPFAM" id="SSF48366">
    <property type="entry name" value="Ras GEF"/>
    <property type="match status" value="1"/>
</dbReference>
<dbReference type="PROSITE" id="PS50009">
    <property type="entry name" value="RASGEF_CAT"/>
    <property type="match status" value="1"/>
</dbReference>
<dbReference type="PROSITE" id="PS50212">
    <property type="entry name" value="RASGEF_NTER"/>
    <property type="match status" value="1"/>
</dbReference>
<dbReference type="PROSITE" id="PS50238">
    <property type="entry name" value="RHOGAP"/>
    <property type="match status" value="1"/>
</dbReference>
<reference key="1">
    <citation type="journal article" date="2005" name="Nature">
        <title>The genome of the social amoeba Dictyostelium discoideum.</title>
        <authorList>
            <person name="Eichinger L."/>
            <person name="Pachebat J.A."/>
            <person name="Gloeckner G."/>
            <person name="Rajandream M.A."/>
            <person name="Sucgang R."/>
            <person name="Berriman M."/>
            <person name="Song J."/>
            <person name="Olsen R."/>
            <person name="Szafranski K."/>
            <person name="Xu Q."/>
            <person name="Tunggal B."/>
            <person name="Kummerfeld S."/>
            <person name="Madera M."/>
            <person name="Konfortov B.A."/>
            <person name="Rivero F."/>
            <person name="Bankier A.T."/>
            <person name="Lehmann R."/>
            <person name="Hamlin N."/>
            <person name="Davies R."/>
            <person name="Gaudet P."/>
            <person name="Fey P."/>
            <person name="Pilcher K."/>
            <person name="Chen G."/>
            <person name="Saunders D."/>
            <person name="Sodergren E.J."/>
            <person name="Davis P."/>
            <person name="Kerhornou A."/>
            <person name="Nie X."/>
            <person name="Hall N."/>
            <person name="Anjard C."/>
            <person name="Hemphill L."/>
            <person name="Bason N."/>
            <person name="Farbrother P."/>
            <person name="Desany B."/>
            <person name="Just E."/>
            <person name="Morio T."/>
            <person name="Rost R."/>
            <person name="Churcher C.M."/>
            <person name="Cooper J."/>
            <person name="Haydock S."/>
            <person name="van Driessche N."/>
            <person name="Cronin A."/>
            <person name="Goodhead I."/>
            <person name="Muzny D.M."/>
            <person name="Mourier T."/>
            <person name="Pain A."/>
            <person name="Lu M."/>
            <person name="Harper D."/>
            <person name="Lindsay R."/>
            <person name="Hauser H."/>
            <person name="James K.D."/>
            <person name="Quiles M."/>
            <person name="Madan Babu M."/>
            <person name="Saito T."/>
            <person name="Buchrieser C."/>
            <person name="Wardroper A."/>
            <person name="Felder M."/>
            <person name="Thangavelu M."/>
            <person name="Johnson D."/>
            <person name="Knights A."/>
            <person name="Loulseged H."/>
            <person name="Mungall K.L."/>
            <person name="Oliver K."/>
            <person name="Price C."/>
            <person name="Quail M.A."/>
            <person name="Urushihara H."/>
            <person name="Hernandez J."/>
            <person name="Rabbinowitsch E."/>
            <person name="Steffen D."/>
            <person name="Sanders M."/>
            <person name="Ma J."/>
            <person name="Kohara Y."/>
            <person name="Sharp S."/>
            <person name="Simmonds M.N."/>
            <person name="Spiegler S."/>
            <person name="Tivey A."/>
            <person name="Sugano S."/>
            <person name="White B."/>
            <person name="Walker D."/>
            <person name="Woodward J.R."/>
            <person name="Winckler T."/>
            <person name="Tanaka Y."/>
            <person name="Shaulsky G."/>
            <person name="Schleicher M."/>
            <person name="Weinstock G.M."/>
            <person name="Rosenthal A."/>
            <person name="Cox E.C."/>
            <person name="Chisholm R.L."/>
            <person name="Gibbs R.A."/>
            <person name="Loomis W.F."/>
            <person name="Platzer M."/>
            <person name="Kay R.R."/>
            <person name="Williams J.G."/>
            <person name="Dear P.H."/>
            <person name="Noegel A.A."/>
            <person name="Barrell B.G."/>
            <person name="Kuspa A."/>
        </authorList>
    </citation>
    <scope>NUCLEOTIDE SEQUENCE [LARGE SCALE GENOMIC DNA]</scope>
    <source>
        <strain>AX4</strain>
    </source>
</reference>
<reference key="2">
    <citation type="journal article" date="2016" name="Dev. Cell">
        <title>A Galpha-Stimulated RapGEF Is a Receptor-Proximal Regulator of Dictyostelium Chemotaxis.</title>
        <authorList>
            <person name="Liu Y."/>
            <person name="Lacal J."/>
            <person name="Veltman D.M."/>
            <person name="Fusetti F."/>
            <person name="van Haastert P.J."/>
            <person name="Firtel R.A."/>
            <person name="Kortholt A."/>
        </authorList>
    </citation>
    <scope>INTERACTION WITH GALPHA2 AND RAPA</scope>
    <scope>FUNCTION</scope>
    <scope>DISRUPTION PHENOTYPE</scope>
    <scope>MUTAGENESIS OF THR-1180</scope>
    <scope>DOMAIN</scope>
    <scope>SUBCELLULAR LOCATION</scope>
    <scope>PHOSPHORYLATION AT SER-197 AND THR-201</scope>
</reference>
<reference key="3">
    <citation type="journal article" date="2017" name="J. Cell Sci.">
        <title>The F-actin-binding RapGEF GflB is required for efficient macropinocytosis in Dictyostelium.</title>
        <authorList>
            <person name="Inaba H."/>
            <person name="Yoda K."/>
            <person name="Adachi H."/>
        </authorList>
    </citation>
    <scope>DISRUPTION PHENOTYPE</scope>
    <scope>FUNCTION</scope>
    <scope>SUBCELLULAR LOCATION</scope>
    <scope>INTERACTION WITH F-ACTIN</scope>
    <scope>DOMAIN</scope>
</reference>
<reference key="4">
    <citation type="journal article" date="2018" name="Environ. Microbiol.">
        <title>Phosphodiesterase PdeD, dynacortin, and a Kelch repeat-containing protein are direct GSK3 substrates in Dictyostelium that contribute to chemotaxis towards cAMP.</title>
        <authorList>
            <person name="Baumgardner K."/>
            <person name="Lin C."/>
            <person name="Firtel R.A."/>
            <person name="Lacal J."/>
        </authorList>
    </citation>
    <scope>FUNCTION</scope>
</reference>
<gene>
    <name evidence="8" type="primary">gflB</name>
    <name type="synonym">RacGAP</name>
    <name type="ORF">DDB0187142</name>
</gene>
<feature type="chain" id="PRO_0000447604" description="Ras guanine nucleotide exchange factor glfB">
    <location>
        <begin position="1"/>
        <end position="1601"/>
    </location>
</feature>
<feature type="domain" description="Rho-GAP" evidence="3">
    <location>
        <begin position="649"/>
        <end position="836"/>
    </location>
</feature>
<feature type="domain" description="N-terminal Ras-GEF" evidence="1">
    <location>
        <begin position="851"/>
        <end position="983"/>
    </location>
</feature>
<feature type="domain" description="Ras-GEF" evidence="2">
    <location>
        <begin position="1021"/>
        <end position="1255"/>
    </location>
</feature>
<feature type="region of interest" description="Disordered" evidence="4">
    <location>
        <begin position="43"/>
        <end position="140"/>
    </location>
</feature>
<feature type="region of interest" description="Disordered" evidence="4">
    <location>
        <begin position="188"/>
        <end position="256"/>
    </location>
</feature>
<feature type="region of interest" description="Disordered" evidence="4">
    <location>
        <begin position="310"/>
        <end position="461"/>
    </location>
</feature>
<feature type="region of interest" description="Disordered" evidence="4">
    <location>
        <begin position="475"/>
        <end position="630"/>
    </location>
</feature>
<feature type="region of interest" description="N-terminal F-actin-binding domain" evidence="8">
    <location>
        <begin position="1262"/>
        <end position="1601"/>
    </location>
</feature>
<feature type="region of interest" description="Disordered" evidence="4">
    <location>
        <begin position="1443"/>
        <end position="1474"/>
    </location>
</feature>
<feature type="compositionally biased region" description="Pro residues" evidence="4">
    <location>
        <begin position="45"/>
        <end position="55"/>
    </location>
</feature>
<feature type="compositionally biased region" description="Polar residues" evidence="4">
    <location>
        <begin position="57"/>
        <end position="69"/>
    </location>
</feature>
<feature type="compositionally biased region" description="Low complexity" evidence="4">
    <location>
        <begin position="70"/>
        <end position="126"/>
    </location>
</feature>
<feature type="compositionally biased region" description="Low complexity" evidence="4">
    <location>
        <begin position="211"/>
        <end position="256"/>
    </location>
</feature>
<feature type="compositionally biased region" description="Low complexity" evidence="4">
    <location>
        <begin position="310"/>
        <end position="330"/>
    </location>
</feature>
<feature type="compositionally biased region" description="Acidic residues" evidence="4">
    <location>
        <begin position="331"/>
        <end position="359"/>
    </location>
</feature>
<feature type="compositionally biased region" description="Polar residues" evidence="4">
    <location>
        <begin position="384"/>
        <end position="398"/>
    </location>
</feature>
<feature type="compositionally biased region" description="Low complexity" evidence="4">
    <location>
        <begin position="435"/>
        <end position="458"/>
    </location>
</feature>
<feature type="compositionally biased region" description="Low complexity" evidence="4">
    <location>
        <begin position="475"/>
        <end position="493"/>
    </location>
</feature>
<feature type="compositionally biased region" description="Low complexity" evidence="4">
    <location>
        <begin position="500"/>
        <end position="520"/>
    </location>
</feature>
<feature type="compositionally biased region" description="Basic and acidic residues" evidence="4">
    <location>
        <begin position="521"/>
        <end position="533"/>
    </location>
</feature>
<feature type="compositionally biased region" description="Low complexity" evidence="4">
    <location>
        <begin position="558"/>
        <end position="577"/>
    </location>
</feature>
<feature type="compositionally biased region" description="Basic and acidic residues" evidence="4">
    <location>
        <begin position="578"/>
        <end position="596"/>
    </location>
</feature>
<feature type="compositionally biased region" description="Low complexity" evidence="4">
    <location>
        <begin position="1465"/>
        <end position="1474"/>
    </location>
</feature>
<feature type="site" description="Arginine finger; crucial for GTP hydrolysis by stabilizing the transition state" evidence="3">
    <location>
        <position position="686"/>
    </location>
</feature>
<feature type="modified residue" description="Phosphoserine" evidence="5">
    <location>
        <position position="197"/>
    </location>
</feature>
<feature type="modified residue" description="Phosphothreonine" evidence="5">
    <location>
        <position position="201"/>
    </location>
</feature>
<feature type="mutagenesis site" description="Affects chemotaxis with reduced directionality." evidence="5">
    <original>T</original>
    <variation>E</variation>
    <location>
        <position position="1180"/>
    </location>
</feature>
<proteinExistence type="evidence at protein level"/>
<name>GFLB_DICDI</name>
<protein>
    <recommendedName>
        <fullName evidence="8">Ras guanine nucleotide exchange factor glfB</fullName>
    </recommendedName>
    <alternativeName>
        <fullName evidence="8">GEF-Like protein B</fullName>
    </alternativeName>
</protein>
<comment type="function">
    <text evidence="5 6 7">GpaB-activated, rapA-specific guanine nucleotide exchange factor, involved in the regulation of the balance between Ras and Rap signaling at the leading edge of chemotaxing cells (PubMed:27237792, PubMed:29626371). Spatially localized activation of Rap and Ras induces F-actin polymerization at the leading edge of chemotaxing cells through the Rac, PI3K, and TORC2 pathways (PubMed:27237792). Also acts as a key regulator of actin-driven membrane protrusions during processes such as phagocytosis and cytokinesis, possibly by modulating rapA signaling pathways (PubMed:28778987).</text>
</comment>
<comment type="subunit">
    <text evidence="5 6">Interacts with gpaB and rapA (PubMed:27237792). Interacts directly with F-actin (PubMed:28778987).</text>
</comment>
<comment type="subcellular location">
    <subcellularLocation>
        <location evidence="5 6">Cytoplasm</location>
        <location evidence="5 6">Cell cortex</location>
    </subcellularLocation>
    <subcellularLocation>
        <location evidence="6">Cytoplasm</location>
        <location evidence="6">Cytoskeleton</location>
    </subcellularLocation>
    <subcellularLocation>
        <location evidence="6">Cell projection</location>
        <location evidence="6">Filopodium</location>
    </subcellularLocation>
    <subcellularLocation>
        <location evidence="6">Cell projection</location>
        <location evidence="6">Lamellipodium</location>
    </subcellularLocation>
    <text evidence="5 6">During chemotaxis, localizes at the leading edge of cells, whereas in response to cAMP stimulation, rapidly and transiently translocates to the cortex (PubMed:27237792). Localizes to F-actin-rich regions (PubMed:28778987). During macropinocytosis, strongly localizes to crowns and remains there for a short time after the cups were enclosed (PubMed:28778987). During phagocytosis of heat-killed yeast, strongly localizes to phagocytic cups with F-actin (PubMed:28778987). During cytokinesis, mainly colocalizes with F-actin at filopodia or lamellipodia of daughter cells (PubMed:28778987).</text>
</comment>
<comment type="domain">
    <text evidence="5 6">The N-terminus (residues 1262 to 1601) functions to regulate both GflB-GEF activity and its localization at the leading edge of cells by binding F-actin directly.</text>
</comment>
<comment type="PTM">
    <text evidence="5">Simultaneously phosphorylated at Ser-197 and Thr-201 after cAMP stimulation.</text>
</comment>
<comment type="disruption phenotype">
    <text evidence="5 6">Leads to considerable chemotaxis defects, including poorer directionality, more directional changes, and slower speed (PubMed:27237792). Exhibits impaired crown formation and particularly retraction, resulting in more crowns (macropinocytic cups) per cell and longer crown lifetimes (PubMed:28778987). Leads to defects in macropinocytosis, phagocytosis and cytokinesis (PubMed:28778987). Leads to increased level of F-actin as well as to flatter and more polarized cells during vegetative growth (PubMed:28778987).</text>
</comment>
<organism>
    <name type="scientific">Dictyostelium discoideum</name>
    <name type="common">Social amoeba</name>
    <dbReference type="NCBI Taxonomy" id="44689"/>
    <lineage>
        <taxon>Eukaryota</taxon>
        <taxon>Amoebozoa</taxon>
        <taxon>Evosea</taxon>
        <taxon>Eumycetozoa</taxon>
        <taxon>Dictyostelia</taxon>
        <taxon>Dictyosteliales</taxon>
        <taxon>Dictyosteliaceae</taxon>
        <taxon>Dictyostelium</taxon>
    </lineage>
</organism>
<sequence>MTDLNSESFSALNFWKSVEKKNISTNFQGTKVVAPSKKINSFPLLAPPAPPPPPTEQEINIGSGNSTFISSNNNNSNNNNNNNSNNNNNNNLNNSNNNNNNLNSNNNNNNNNNNNNNNGNNNNNSNFLTRQDSSTQKEWDEQNVTEAFGFWKQKAVQLQKETERYNARRNARQTIDLTNILRKSTSSDLLIKPPVESPPLTPVGQDDEGEQQQQQQQQKQSSPSTPSNDTDTETTAAAVTTTTTTTTTTTTSTTTTTTETVLQANQLEIKYGGETIAVVDDSGTTPRDYRRSRSISCEIIPKINGVITTSPQRVTTTTTTTTPSTGGVVVADEESDSSEEESDSSEEESDEYTDEESETELQVVSNATPRRSDDFTPTIVESPPLTSVNSNDNTSSGTVVAPIDLNSSTGGNTGSQQPPQPSSQQQKPDQASENTAVAASSISATTNVTSAASTTTVAPDSIINTKDVTVVSSTLTTTTSATSSTTSATTQSIPAPPSPSQQRAAQSISTSSVTPAAITKPTKDAKDKKDPAKKSIGATLTRTVTKTFIRDSKENNKVPTGTSPPVSSSTSISSSTGIKKDKVKLSKEEKDRIKKEKSAKKKKEKDEKKQQKTNKKALTKNNSSTDVKKGFVSPQQQQILDSPYRIYGVRLTQLVLSNDGDLPAILTQTITVLSNSNKLDVNSVFVGAENEPAVREIRKRSDLERIDFSIIGDPRVVAGLLILFFAELPQPLFNSKFFGDLVEINDITNPQVKLNDLKQLINSLSQLRRSLLQILVTFFTSKYINGNSVTTRAIAIQSIAQSFGPQFFRGTSSSDSDIQVGIETLKLIIDNYVFLFEKTNEPDVKYKNIDGKMIISEGSIDKLIDKATDQYYPYNEKYFSLTFFITHLFFIQPHELADKLITLYRENLDTLETKKKWKKHRRSKKASFINEAVKLWVDYCYKEMREDKELSKKILKGFPHLEAQLASRLSHRTTINDFLKLPKRVHSRTRSASFSDTLLSTGGIGSTSGGIGGGVNNCLLSAMEIAEQCTLVDYDLFTNVRLSDWVRLVQGSVDPQTAPSLSLALKRSTIWAQWAMGEILSTEDKSQRVAIINLLVDVAINCKDLANFNTAISIHTALTNHHIKRLQQTWDSVPKETLNKITQLEQSLQVWLKPDATNPFGVICQSINSACVPNFSILRTILSQIDQKIPTFSNDGSMVNVEKLRTIFGIVVEIQRLQQQRNYTMKPTKLFIQLQDINTVSMDELADLSLKCEPPVSKAKKYNAPADIVDEDWRLKITKTFNKPLATTSVGIDLPRLASSFTFNTTGHKTTPEEKSAYGNKIQDIFHVLVSLAQIESSELETDVREKFTTYIPMSTDPDSDFKRELLKFLDEVCHADNSKLVRVLKCCNQAIIAPVIIEITLNIAKGVPFMDAGGWRILISNINNSNNSVILDKIDEINEDSSNVEKEKLSSSQEQQEQQEQKQQEQQQQQQEPQPLFIRHYKKQRSRSAQSKDFFEFEWFIQLNLDADCKNILSFDLKISNLVFSTDTSPNIRDQLLESFKSYLVSQECVQYINFNENKQPVAAPVTPATTIVTTKEESTTVTSSTTTVVQESVPSTNAE</sequence>
<accession>Q54L90</accession>
<evidence type="ECO:0000255" key="1">
    <source>
        <dbReference type="PROSITE-ProRule" id="PRU00135"/>
    </source>
</evidence>
<evidence type="ECO:0000255" key="2">
    <source>
        <dbReference type="PROSITE-ProRule" id="PRU00168"/>
    </source>
</evidence>
<evidence type="ECO:0000255" key="3">
    <source>
        <dbReference type="PROSITE-ProRule" id="PRU00172"/>
    </source>
</evidence>
<evidence type="ECO:0000256" key="4">
    <source>
        <dbReference type="SAM" id="MobiDB-lite"/>
    </source>
</evidence>
<evidence type="ECO:0000269" key="5">
    <source>
    </source>
</evidence>
<evidence type="ECO:0000269" key="6">
    <source>
    </source>
</evidence>
<evidence type="ECO:0000269" key="7">
    <source>
    </source>
</evidence>
<evidence type="ECO:0000303" key="8">
    <source>
    </source>
</evidence>
<keyword id="KW-0009">Actin-binding</keyword>
<keyword id="KW-0966">Cell projection</keyword>
<keyword id="KW-0145">Chemotaxis</keyword>
<keyword id="KW-0963">Cytoplasm</keyword>
<keyword id="KW-0206">Cytoskeleton</keyword>
<keyword id="KW-0344">Guanine-nucleotide releasing factor</keyword>
<keyword id="KW-0597">Phosphoprotein</keyword>